<evidence type="ECO:0000305" key="1"/>
<dbReference type="EMBL" id="M65252">
    <property type="protein sequence ID" value="AAA22410.1"/>
    <property type="molecule type" value="Genomic_DNA"/>
</dbReference>
<dbReference type="PIR" id="A41052">
    <property type="entry name" value="A41052"/>
</dbReference>
<dbReference type="SMR" id="Q03748"/>
<dbReference type="GO" id="GO:0005102">
    <property type="term" value="F:signaling receptor binding"/>
    <property type="evidence" value="ECO:0007669"/>
    <property type="project" value="InterPro"/>
</dbReference>
<dbReference type="GO" id="GO:0090729">
    <property type="term" value="F:toxin activity"/>
    <property type="evidence" value="ECO:0007669"/>
    <property type="project" value="UniProtKB-KW"/>
</dbReference>
<dbReference type="GO" id="GO:0030435">
    <property type="term" value="P:sporulation resulting in formation of a cellular spore"/>
    <property type="evidence" value="ECO:0007669"/>
    <property type="project" value="UniProtKB-KW"/>
</dbReference>
<dbReference type="GO" id="GO:0001907">
    <property type="term" value="P:symbiont-mediated killing of host cell"/>
    <property type="evidence" value="ECO:0007669"/>
    <property type="project" value="InterPro"/>
</dbReference>
<dbReference type="CDD" id="cd04085">
    <property type="entry name" value="delta_endotoxin_C"/>
    <property type="match status" value="1"/>
</dbReference>
<dbReference type="Gene3D" id="2.60.120.260">
    <property type="entry name" value="Galactose-binding domain-like"/>
    <property type="match status" value="1"/>
</dbReference>
<dbReference type="Gene3D" id="2.100.10.10">
    <property type="entry name" value="Pesticidal crystal protein, central domain"/>
    <property type="match status" value="1"/>
</dbReference>
<dbReference type="Gene3D" id="1.20.190.10">
    <property type="entry name" value="Pesticidal crystal protein, N-terminal domain"/>
    <property type="match status" value="1"/>
</dbReference>
<dbReference type="InterPro" id="IPR048645">
    <property type="entry name" value="Cry1Ac-like_dom-VII"/>
</dbReference>
<dbReference type="InterPro" id="IPR041587">
    <property type="entry name" value="Cry_V"/>
</dbReference>
<dbReference type="InterPro" id="IPR008979">
    <property type="entry name" value="Galactose-bd-like_sf"/>
</dbReference>
<dbReference type="InterPro" id="IPR038979">
    <property type="entry name" value="Pest_crys"/>
</dbReference>
<dbReference type="InterPro" id="IPR005638">
    <property type="entry name" value="Pest_crys_dom-III"/>
</dbReference>
<dbReference type="InterPro" id="IPR005639">
    <property type="entry name" value="Pest_crys_dom_I"/>
</dbReference>
<dbReference type="InterPro" id="IPR036716">
    <property type="entry name" value="Pest_crys_N_sf"/>
</dbReference>
<dbReference type="InterPro" id="IPR036399">
    <property type="entry name" value="Pest_cryst_cen_dom_sf"/>
</dbReference>
<dbReference type="InterPro" id="IPR001178">
    <property type="entry name" value="Pest_cryst_dom_II"/>
</dbReference>
<dbReference type="PANTHER" id="PTHR37003">
    <property type="entry name" value="ENDOTOXIN_N DOMAIN-CONTAINING PROTEIN-RELATED"/>
    <property type="match status" value="1"/>
</dbReference>
<dbReference type="PANTHER" id="PTHR37003:SF2">
    <property type="entry name" value="PESTICIDAL CRYSTAL PROTEIN N-TERMINAL DOMAIN-CONTAINING PROTEIN"/>
    <property type="match status" value="1"/>
</dbReference>
<dbReference type="Pfam" id="PF17997">
    <property type="entry name" value="Cry1Ac_D5"/>
    <property type="match status" value="1"/>
</dbReference>
<dbReference type="Pfam" id="PF21463">
    <property type="entry name" value="Cry1Ac_dom-VII"/>
    <property type="match status" value="1"/>
</dbReference>
<dbReference type="Pfam" id="PF03944">
    <property type="entry name" value="Endotoxin_C"/>
    <property type="match status" value="1"/>
</dbReference>
<dbReference type="Pfam" id="PF00555">
    <property type="entry name" value="Endotoxin_M"/>
    <property type="match status" value="1"/>
</dbReference>
<dbReference type="Pfam" id="PF03945">
    <property type="entry name" value="Endotoxin_N"/>
    <property type="match status" value="1"/>
</dbReference>
<dbReference type="SUPFAM" id="SSF51096">
    <property type="entry name" value="delta-Endotoxin (insectocide), middle domain"/>
    <property type="match status" value="1"/>
</dbReference>
<dbReference type="SUPFAM" id="SSF56849">
    <property type="entry name" value="delta-Endotoxin (insectocide), N-terminal domain"/>
    <property type="match status" value="1"/>
</dbReference>
<dbReference type="SUPFAM" id="SSF49785">
    <property type="entry name" value="Galactose-binding domain-like"/>
    <property type="match status" value="1"/>
</dbReference>
<keyword id="KW-0749">Sporulation</keyword>
<keyword id="KW-0800">Toxin</keyword>
<keyword id="KW-0843">Virulence</keyword>
<feature type="chain" id="PRO_0000174026" description="Pesticidal crystal protein Cry1Ae">
    <location>
        <begin position="1"/>
        <end position="1181"/>
    </location>
</feature>
<organism>
    <name type="scientific">Bacillus thuringiensis subsp. alesti</name>
    <dbReference type="NCBI Taxonomy" id="1440"/>
    <lineage>
        <taxon>Bacteria</taxon>
        <taxon>Bacillati</taxon>
        <taxon>Bacillota</taxon>
        <taxon>Bacilli</taxon>
        <taxon>Bacillales</taxon>
        <taxon>Bacillaceae</taxon>
        <taxon>Bacillus</taxon>
        <taxon>Bacillus cereus group</taxon>
    </lineage>
</organism>
<accession>Q03748</accession>
<sequence length="1181" mass="133738">MDNNPKINECIPYNCLSNPEVEVLGGERIETGYTPIDISLSLTQFLLSEFVPGAGFVLGLIDLIWGFVGPSQWDAFLVQIEQLISQRIEEFARNQAISRLEGLSNLYQIYAEAFREWEADPTNPALREEMRIQFNDMNSALTTAIPLFTVQNYQVPLLSVYVQAVNLHLSVLRDVSVFGQRWGLDVATINSRYNDLTRLIGTYTDYAVRWYNTGLERVWGPDSRDWVRYNQFRRELTLTVLDIVSLFPNYDSRTYPIRTVSQLTREIYTNPVLENFDGSFRGSAQRIEQSIRSPHLMDILNSITIYTDAHGGYYYWSGHQIMASPVGFSGPEFTFPLYGTMGNAAPQQRIVAQLGQGVYRTLSSTFYRNPFIIGINNQRLSVLDGTEFAYGSSSNLPSAVYRKSGTVDSLDEIPPQDNNVPPRQGFSHRLSHVSMFRSGFSNSSVSIIRAPMFSWIHRSAEFNNIIPSSQITQIPLTKSTNLGSGTSVVKGPGFTGGDILRRTSPGQISTLRVNITAPLSQRYRVRIRYASTTNLQFHTSIDGRPINQGNFSATMSSGGNLQSGSFRTVGFTTPFNFSNGSSVFTLSAHVFNSGNEVYIDRIEFVPAEVTFEAEYDLERAQEAVNALFTSPNQIGLKTDVTDYHIDQVSNLVECLSDEFCLDEKRELSEKVKHAKRLSDERNLLQDPNFRGINRQPDRGWRGSTDITIQGGDDVFKENYVTLPGTFDECYPTYLYQKIDESKLKAYTRYELRGYIEDSQDLEIYLIRYNAKHETVNVPGTGSLWPLSFESSIGKCGEPNRCAPHLEWNPDLDCSCRDGEKCAHHSHHFSLDIDVGCIDLNEDLGVWVIFKIKTQDGHARLGNLEFLEEKPLVGEALARVKRAEKKWRDKREKLQLETNIVYKEAKESVDALFVNSQYDQLQADTNIAMIHTADKRVHRIQEAYLPELSVIPGVNAGIFEELEGRIFTAYSLYDARNVIKNGDFNNGLSCWNVKGHVDVEEQNNHRSVLVVPEWEAEVSQEVRVCPGRGYILRVTAYKEGYGEGCVTIHEIENNTDELKFSNCVEEEVYPNNTVTCNEYTANQEEYGGAYTSCNRGYDETYGSNYSVPADYASVYEEKAYTDGRRENPCESNRGYGDYTPLPAGYVTKQLEYFPETDKVWIEIGETEGTFIVDSVELFLMEE</sequence>
<reference key="1">
    <citation type="journal article" date="1991" name="J. Bacteriol.">
        <title>Cloning and analysis of delta-endotoxin genes from Bacillus thuringiensis subsp. alesti.</title>
        <authorList>
            <person name="Lee C.S."/>
            <person name="Aronson A.I."/>
        </authorList>
    </citation>
    <scope>NUCLEOTIDE SEQUENCE [GENOMIC DNA]</scope>
</reference>
<name>CR1AE_BACTL</name>
<proteinExistence type="evidence at transcript level"/>
<gene>
    <name type="primary">cry1Ae</name>
    <name type="synonym">cryIA(e)</name>
    <name type="synonym">endI</name>
</gene>
<comment type="function">
    <text>Promotes colloidosmotic lysis by binding to the midgut epithelial cells of many lepidopteran larvae.</text>
</comment>
<comment type="developmental stage">
    <text>The crystal protein is produced during sporulation and is accumulated both as an inclusion and as part of the spore coat.</text>
</comment>
<comment type="miscellaneous">
    <text>Toxic segment of the protein is located in the N-terminus.</text>
</comment>
<comment type="similarity">
    <text evidence="1">Belongs to the delta endotoxin family.</text>
</comment>
<protein>
    <recommendedName>
        <fullName>Pesticidal crystal protein Cry1Ae</fullName>
    </recommendedName>
    <alternativeName>
        <fullName>134 kDa crystal protein</fullName>
    </alternativeName>
    <alternativeName>
        <fullName>Crystaline entomocidal protoxin</fullName>
    </alternativeName>
    <alternativeName>
        <fullName>Insecticidal delta-endotoxin CryIA(e)</fullName>
    </alternativeName>
</protein>